<comment type="similarity">
    <text evidence="3 4 5">Belongs to the peptidase C1 family.</text>
</comment>
<reference key="1">
    <citation type="journal article" date="1996" name="DNA Cell Biol.">
        <title>Isolation and characterization of four developmentally regulated cathepsin B-like cysteine protease genes from the nematode Caenorhabditis elegans.</title>
        <authorList>
            <person name="Larminie C.G.C."/>
            <person name="Johnstone I.L."/>
        </authorList>
    </citation>
    <scope>NUCLEOTIDE SEQUENCE [GENOMIC DNA / MRNA]</scope>
    <source>
        <strain>Bristol N2</strain>
    </source>
</reference>
<reference key="2">
    <citation type="journal article" date="1998" name="Science">
        <title>Genome sequence of the nematode C. elegans: a platform for investigating biology.</title>
        <authorList>
            <consortium name="The C. elegans sequencing consortium"/>
        </authorList>
    </citation>
    <scope>NUCLEOTIDE SEQUENCE [LARGE SCALE GENOMIC DNA]</scope>
    <source>
        <strain>Bristol N2</strain>
    </source>
</reference>
<organism>
    <name type="scientific">Caenorhabditis elegans</name>
    <dbReference type="NCBI Taxonomy" id="6239"/>
    <lineage>
        <taxon>Eukaryota</taxon>
        <taxon>Metazoa</taxon>
        <taxon>Ecdysozoa</taxon>
        <taxon>Nematoda</taxon>
        <taxon>Chromadorea</taxon>
        <taxon>Rhabditida</taxon>
        <taxon>Rhabditina</taxon>
        <taxon>Rhabditomorpha</taxon>
        <taxon>Rhabditoidea</taxon>
        <taxon>Rhabditidae</taxon>
        <taxon>Peloderinae</taxon>
        <taxon>Caenorhabditis</taxon>
    </lineage>
</organism>
<sequence length="344" mass="37391">MWKLSAILLVAAASAVVIPGHREAPALTGQALIDYVNSAQKLWTAGHQVIPKEKITKKLMDVKYLVPHKDEDIVATEVSDAIPDHFDARDQWPNCMSINNIRDQSDCGSCWAFAAAEAISDRTCIASNGAVNTLLSSEDLLSCCTGMFSCGNGCEGGYPIQAWKWWVKHGLVTGGSYETQFGCKPYSIAPCGETVNGVKWPACPEDTEPTPKCVDSCTSKNNYATPYLQDKHFGSTAYAVGKKVEQIQTEILTNGPIEVAFTVYEDFYQYTTGVYVHTAGASLGGHAVKILGWGVDNGTPYWLVANSWNVAWGEKGYFRIIRGLNECGIEHSAVAGIPDLARHN</sequence>
<protein>
    <recommendedName>
        <fullName>Cathepsin B-like cysteine proteinase 5</fullName>
        <ecNumber>3.4.22.-</ecNumber>
    </recommendedName>
    <alternativeName>
        <fullName>Cysteine protease-related 5</fullName>
    </alternativeName>
</protein>
<gene>
    <name type="primary">cpr-5</name>
    <name type="ORF">W07B8.5</name>
</gene>
<accession>P43509</accession>
<name>CPR5_CAEEL</name>
<feature type="signal peptide" evidence="2">
    <location>
        <begin position="1"/>
        <end position="15"/>
    </location>
</feature>
<feature type="propeptide" id="PRO_0000026196" evidence="2">
    <location>
        <begin position="16"/>
        <end position="81"/>
    </location>
</feature>
<feature type="chain" id="PRO_0000026197" description="Cathepsin B-like cysteine proteinase 5">
    <location>
        <begin position="82"/>
        <end position="344"/>
    </location>
</feature>
<feature type="active site" evidence="1">
    <location>
        <position position="110"/>
    </location>
</feature>
<feature type="active site" evidence="1">
    <location>
        <position position="286"/>
    </location>
</feature>
<feature type="active site" evidence="1">
    <location>
        <position position="306"/>
    </location>
</feature>
<feature type="disulfide bond" evidence="1">
    <location>
        <begin position="95"/>
        <end position="124"/>
    </location>
</feature>
<feature type="disulfide bond" evidence="1">
    <location>
        <begin position="107"/>
        <end position="154"/>
    </location>
</feature>
<feature type="disulfide bond" evidence="1">
    <location>
        <begin position="143"/>
        <end position="213"/>
    </location>
</feature>
<feature type="disulfide bond" evidence="1">
    <location>
        <begin position="144"/>
        <end position="150"/>
    </location>
</feature>
<feature type="disulfide bond" evidence="1">
    <location>
        <begin position="183"/>
        <end position="217"/>
    </location>
</feature>
<feature type="disulfide bond" evidence="1">
    <location>
        <begin position="191"/>
        <end position="203"/>
    </location>
</feature>
<evidence type="ECO:0000250" key="1"/>
<evidence type="ECO:0000255" key="2"/>
<evidence type="ECO:0000255" key="3">
    <source>
        <dbReference type="PROSITE-ProRule" id="PRU10088"/>
    </source>
</evidence>
<evidence type="ECO:0000255" key="4">
    <source>
        <dbReference type="PROSITE-ProRule" id="PRU10089"/>
    </source>
</evidence>
<evidence type="ECO:0000255" key="5">
    <source>
        <dbReference type="PROSITE-ProRule" id="PRU10090"/>
    </source>
</evidence>
<dbReference type="EC" id="3.4.22.-"/>
<dbReference type="EMBL" id="L39896">
    <property type="protein sequence ID" value="AAA98786.1"/>
    <property type="molecule type" value="mRNA"/>
</dbReference>
<dbReference type="EMBL" id="L39927">
    <property type="protein sequence ID" value="AAA98784.1"/>
    <property type="molecule type" value="Genomic_DNA"/>
</dbReference>
<dbReference type="EMBL" id="FO081739">
    <property type="protein sequence ID" value="CCD74289.1"/>
    <property type="molecule type" value="Genomic_DNA"/>
</dbReference>
<dbReference type="PIR" id="T37277">
    <property type="entry name" value="T37277"/>
</dbReference>
<dbReference type="RefSeq" id="NP_503383.1">
    <property type="nucleotide sequence ID" value="NM_070982.7"/>
</dbReference>
<dbReference type="SMR" id="P43509"/>
<dbReference type="BioGRID" id="43681">
    <property type="interactions" value="20"/>
</dbReference>
<dbReference type="DIP" id="DIP-25329N"/>
<dbReference type="FunCoup" id="P43509">
    <property type="interactions" value="519"/>
</dbReference>
<dbReference type="IntAct" id="P43509">
    <property type="interactions" value="3"/>
</dbReference>
<dbReference type="STRING" id="6239.W07B8.5.1"/>
<dbReference type="MEROPS" id="C01.A35"/>
<dbReference type="PaxDb" id="6239-W07B8.5"/>
<dbReference type="PeptideAtlas" id="P43509"/>
<dbReference type="EnsemblMetazoa" id="W07B8.5.1">
    <property type="protein sequence ID" value="W07B8.5.1"/>
    <property type="gene ID" value="WBGene00000785"/>
</dbReference>
<dbReference type="GeneID" id="178612"/>
<dbReference type="KEGG" id="cel:CELE_W07B8.5"/>
<dbReference type="UCSC" id="W07B8.5.1">
    <property type="organism name" value="c. elegans"/>
</dbReference>
<dbReference type="AGR" id="WB:WBGene00000785"/>
<dbReference type="CTD" id="178612"/>
<dbReference type="WormBase" id="W07B8.5">
    <property type="protein sequence ID" value="CE14682"/>
    <property type="gene ID" value="WBGene00000785"/>
    <property type="gene designation" value="cpr-5"/>
</dbReference>
<dbReference type="eggNOG" id="KOG1543">
    <property type="taxonomic scope" value="Eukaryota"/>
</dbReference>
<dbReference type="GeneTree" id="ENSGT00970000196395"/>
<dbReference type="HOGENOM" id="CLU_012184_3_3_1"/>
<dbReference type="InParanoid" id="P43509"/>
<dbReference type="OMA" id="VMVSTTW"/>
<dbReference type="OrthoDB" id="10058785at2759"/>
<dbReference type="PhylomeDB" id="P43509"/>
<dbReference type="PRO" id="PR:P43509"/>
<dbReference type="Proteomes" id="UP000001940">
    <property type="component" value="Chromosome V"/>
</dbReference>
<dbReference type="Bgee" id="WBGene00000785">
    <property type="expression patterns" value="Expressed in adult organism and 4 other cell types or tissues"/>
</dbReference>
<dbReference type="GO" id="GO:0005615">
    <property type="term" value="C:extracellular space"/>
    <property type="evidence" value="ECO:0000318"/>
    <property type="project" value="GO_Central"/>
</dbReference>
<dbReference type="GO" id="GO:0005764">
    <property type="term" value="C:lysosome"/>
    <property type="evidence" value="ECO:0000318"/>
    <property type="project" value="GO_Central"/>
</dbReference>
<dbReference type="GO" id="GO:0004197">
    <property type="term" value="F:cysteine-type endopeptidase activity"/>
    <property type="evidence" value="ECO:0000318"/>
    <property type="project" value="GO_Central"/>
</dbReference>
<dbReference type="GO" id="GO:0051603">
    <property type="term" value="P:proteolysis involved in protein catabolic process"/>
    <property type="evidence" value="ECO:0000318"/>
    <property type="project" value="GO_Central"/>
</dbReference>
<dbReference type="CDD" id="cd02620">
    <property type="entry name" value="Peptidase_C1A_CathepsinB"/>
    <property type="match status" value="1"/>
</dbReference>
<dbReference type="FunFam" id="3.90.70.10:FF:000031">
    <property type="entry name" value="Cathepsin B"/>
    <property type="match status" value="1"/>
</dbReference>
<dbReference type="Gene3D" id="3.90.70.10">
    <property type="entry name" value="Cysteine proteinases"/>
    <property type="match status" value="1"/>
</dbReference>
<dbReference type="InterPro" id="IPR038765">
    <property type="entry name" value="Papain-like_cys_pep_sf"/>
</dbReference>
<dbReference type="InterPro" id="IPR025661">
    <property type="entry name" value="Pept_asp_AS"/>
</dbReference>
<dbReference type="InterPro" id="IPR000169">
    <property type="entry name" value="Pept_cys_AS"/>
</dbReference>
<dbReference type="InterPro" id="IPR025660">
    <property type="entry name" value="Pept_his_AS"/>
</dbReference>
<dbReference type="InterPro" id="IPR013128">
    <property type="entry name" value="Peptidase_C1A"/>
</dbReference>
<dbReference type="InterPro" id="IPR000668">
    <property type="entry name" value="Peptidase_C1A_C"/>
</dbReference>
<dbReference type="PANTHER" id="PTHR12411">
    <property type="entry name" value="CYSTEINE PROTEASE FAMILY C1-RELATED"/>
    <property type="match status" value="1"/>
</dbReference>
<dbReference type="Pfam" id="PF00112">
    <property type="entry name" value="Peptidase_C1"/>
    <property type="match status" value="1"/>
</dbReference>
<dbReference type="PRINTS" id="PR00705">
    <property type="entry name" value="PAPAIN"/>
</dbReference>
<dbReference type="SMART" id="SM00645">
    <property type="entry name" value="Pept_C1"/>
    <property type="match status" value="1"/>
</dbReference>
<dbReference type="SUPFAM" id="SSF54001">
    <property type="entry name" value="Cysteine proteinases"/>
    <property type="match status" value="1"/>
</dbReference>
<dbReference type="PROSITE" id="PS00640">
    <property type="entry name" value="THIOL_PROTEASE_ASN"/>
    <property type="match status" value="1"/>
</dbReference>
<dbReference type="PROSITE" id="PS00139">
    <property type="entry name" value="THIOL_PROTEASE_CYS"/>
    <property type="match status" value="1"/>
</dbReference>
<dbReference type="PROSITE" id="PS00639">
    <property type="entry name" value="THIOL_PROTEASE_HIS"/>
    <property type="match status" value="1"/>
</dbReference>
<proteinExistence type="evidence at transcript level"/>
<keyword id="KW-1015">Disulfide bond</keyword>
<keyword id="KW-0378">Hydrolase</keyword>
<keyword id="KW-0645">Protease</keyword>
<keyword id="KW-1185">Reference proteome</keyword>
<keyword id="KW-0732">Signal</keyword>
<keyword id="KW-0788">Thiol protease</keyword>
<keyword id="KW-0865">Zymogen</keyword>